<evidence type="ECO:0000255" key="1">
    <source>
        <dbReference type="HAMAP-Rule" id="MF_01077"/>
    </source>
</evidence>
<evidence type="ECO:0000305" key="2"/>
<gene>
    <name evidence="1" type="primary">rimP</name>
    <name type="ordered locus">SYNPCC7002_A0752</name>
</gene>
<sequence>MAHPLIPRIVTCAEPIAAELGLEVVDVVFQTNKKPPVLRIDVRNLSQDTGLEDCERFSRLLDPQLEAQEIIPGAYVLEVSSPGTDRNLTTDREFIAFRGFPVRVKTYAPYKDQKEWCGTLRERDEAAIHLNLKGKAIAIPRELVAKVQLDDQP</sequence>
<keyword id="KW-0963">Cytoplasm</keyword>
<keyword id="KW-1185">Reference proteome</keyword>
<keyword id="KW-0690">Ribosome biogenesis</keyword>
<comment type="function">
    <text evidence="1">Required for maturation of 30S ribosomal subunits.</text>
</comment>
<comment type="subcellular location">
    <subcellularLocation>
        <location evidence="1">Cytoplasm</location>
    </subcellularLocation>
</comment>
<comment type="similarity">
    <text evidence="1">Belongs to the RimP family.</text>
</comment>
<comment type="sequence caution" evidence="2">
    <conflict type="erroneous initiation">
        <sequence resource="EMBL-CDS" id="ACA98757"/>
    </conflict>
</comment>
<organism>
    <name type="scientific">Picosynechococcus sp. (strain ATCC 27264 / PCC 7002 / PR-6)</name>
    <name type="common">Agmenellum quadruplicatum</name>
    <dbReference type="NCBI Taxonomy" id="32049"/>
    <lineage>
        <taxon>Bacteria</taxon>
        <taxon>Bacillati</taxon>
        <taxon>Cyanobacteriota</taxon>
        <taxon>Cyanophyceae</taxon>
        <taxon>Oscillatoriophycideae</taxon>
        <taxon>Chroococcales</taxon>
        <taxon>Geminocystaceae</taxon>
        <taxon>Picosynechococcus</taxon>
    </lineage>
</organism>
<protein>
    <recommendedName>
        <fullName evidence="1">Ribosome maturation factor RimP</fullName>
    </recommendedName>
</protein>
<feature type="chain" id="PRO_0000384791" description="Ribosome maturation factor RimP">
    <location>
        <begin position="1"/>
        <end position="153"/>
    </location>
</feature>
<accession>B1XI06</accession>
<name>RIMP_PICP2</name>
<proteinExistence type="inferred from homology"/>
<dbReference type="EMBL" id="CP000951">
    <property type="protein sequence ID" value="ACA98757.1"/>
    <property type="status" value="ALT_INIT"/>
    <property type="molecule type" value="Genomic_DNA"/>
</dbReference>
<dbReference type="RefSeq" id="WP_030005977.1">
    <property type="nucleotide sequence ID" value="NZ_JAHHPU010000001.1"/>
</dbReference>
<dbReference type="SMR" id="B1XI06"/>
<dbReference type="STRING" id="32049.SYNPCC7002_A0752"/>
<dbReference type="KEGG" id="syp:SYNPCC7002_A0752"/>
<dbReference type="eggNOG" id="COG0779">
    <property type="taxonomic scope" value="Bacteria"/>
</dbReference>
<dbReference type="HOGENOM" id="CLU_070525_2_1_3"/>
<dbReference type="Proteomes" id="UP000001688">
    <property type="component" value="Chromosome"/>
</dbReference>
<dbReference type="GO" id="GO:0005829">
    <property type="term" value="C:cytosol"/>
    <property type="evidence" value="ECO:0007669"/>
    <property type="project" value="TreeGrafter"/>
</dbReference>
<dbReference type="GO" id="GO:0000028">
    <property type="term" value="P:ribosomal small subunit assembly"/>
    <property type="evidence" value="ECO:0007669"/>
    <property type="project" value="TreeGrafter"/>
</dbReference>
<dbReference type="GO" id="GO:0006412">
    <property type="term" value="P:translation"/>
    <property type="evidence" value="ECO:0007669"/>
    <property type="project" value="TreeGrafter"/>
</dbReference>
<dbReference type="CDD" id="cd01734">
    <property type="entry name" value="YlxS_C"/>
    <property type="match status" value="1"/>
</dbReference>
<dbReference type="Gene3D" id="2.30.30.180">
    <property type="entry name" value="Ribosome maturation factor RimP, C-terminal domain"/>
    <property type="match status" value="1"/>
</dbReference>
<dbReference type="Gene3D" id="3.30.300.70">
    <property type="entry name" value="RimP-like superfamily, N-terminal"/>
    <property type="match status" value="1"/>
</dbReference>
<dbReference type="HAMAP" id="MF_01077">
    <property type="entry name" value="RimP"/>
    <property type="match status" value="1"/>
</dbReference>
<dbReference type="InterPro" id="IPR003728">
    <property type="entry name" value="Ribosome_maturation_RimP"/>
</dbReference>
<dbReference type="InterPro" id="IPR028998">
    <property type="entry name" value="RimP_C"/>
</dbReference>
<dbReference type="InterPro" id="IPR036847">
    <property type="entry name" value="RimP_C_sf"/>
</dbReference>
<dbReference type="InterPro" id="IPR028989">
    <property type="entry name" value="RimP_N"/>
</dbReference>
<dbReference type="InterPro" id="IPR035956">
    <property type="entry name" value="RimP_N_sf"/>
</dbReference>
<dbReference type="NCBIfam" id="NF000935">
    <property type="entry name" value="PRK00092.3-3"/>
    <property type="match status" value="1"/>
</dbReference>
<dbReference type="PANTHER" id="PTHR33867">
    <property type="entry name" value="RIBOSOME MATURATION FACTOR RIMP"/>
    <property type="match status" value="1"/>
</dbReference>
<dbReference type="PANTHER" id="PTHR33867:SF1">
    <property type="entry name" value="RIBOSOME MATURATION FACTOR RIMP"/>
    <property type="match status" value="1"/>
</dbReference>
<dbReference type="Pfam" id="PF17384">
    <property type="entry name" value="DUF150_C"/>
    <property type="match status" value="1"/>
</dbReference>
<dbReference type="Pfam" id="PF02576">
    <property type="entry name" value="RimP_N"/>
    <property type="match status" value="1"/>
</dbReference>
<dbReference type="SUPFAM" id="SSF74942">
    <property type="entry name" value="YhbC-like, C-terminal domain"/>
    <property type="match status" value="1"/>
</dbReference>
<dbReference type="SUPFAM" id="SSF75420">
    <property type="entry name" value="YhbC-like, N-terminal domain"/>
    <property type="match status" value="1"/>
</dbReference>
<reference key="1">
    <citation type="submission" date="2008-02" db="EMBL/GenBank/DDBJ databases">
        <title>Complete sequence of Synechococcus sp. PCC 7002.</title>
        <authorList>
            <person name="Li T."/>
            <person name="Zhao J."/>
            <person name="Zhao C."/>
            <person name="Liu Z."/>
            <person name="Zhao F."/>
            <person name="Marquardt J."/>
            <person name="Nomura C.T."/>
            <person name="Persson S."/>
            <person name="Detter J.C."/>
            <person name="Richardson P.M."/>
            <person name="Lanz C."/>
            <person name="Schuster S.C."/>
            <person name="Wang J."/>
            <person name="Li S."/>
            <person name="Huang X."/>
            <person name="Cai T."/>
            <person name="Yu Z."/>
            <person name="Luo J."/>
            <person name="Zhao J."/>
            <person name="Bryant D.A."/>
        </authorList>
    </citation>
    <scope>NUCLEOTIDE SEQUENCE [LARGE SCALE GENOMIC DNA]</scope>
    <source>
        <strain>ATCC 27264 / PCC 7002 / PR-6</strain>
    </source>
</reference>